<organism>
    <name type="scientific">Cryptosporiopsis sp. (strain 8999)</name>
    <dbReference type="NCBI Taxonomy" id="2572248"/>
    <lineage>
        <taxon>Eukaryota</taxon>
        <taxon>Fungi</taxon>
        <taxon>Dikarya</taxon>
        <taxon>Ascomycota</taxon>
        <taxon>Pezizomycotina</taxon>
        <taxon>Leotiomycetes</taxon>
        <taxon>Helotiales</taxon>
        <taxon>Dermateaceae</taxon>
        <taxon>Cryptosporiopsis</taxon>
    </lineage>
</organism>
<sequence>MEEAETNTQVDSVPSNSVRSGAELSSKSKLRDSCHACARSKVRCPKQKPSCSRCEARGTTCQYFFSRRPGRRRETSKSPNPEKQIAIGSSHANNRNSPSFSSTRSTLPSPIASDSNSNFTQPQNSSITTVHNGPENSIESPCWEDFSCEFSDTDFVMPTIDTPFDLSPAYSGSVVQEMNDTAPFPLSSSRISMGTTPSGKSSISSYSQILPSITPTTTPVAHISSCRCLATALDLLKTLSLAGLADADSLVSAPIILAENKQSIESVNNLMACPLCSGDSFPLTIFSMIALKILERYAVAARTQHQGTRPQEAEGTVEIKLADIVISNNEDQTRLPSHSNIVCCDDKTQARAAAQLVLGELHHMQRLVNQLSSMIKRSAERDGRKLEILNGYNDSIDSGNSMLASFSASTLELVESDVRKSLRSLSTDIIKELRQH</sequence>
<gene>
    <name evidence="4" type="primary">dmxR14</name>
</gene>
<accession>A0A4P8DK24</accession>
<feature type="chain" id="PRO_0000453507" description="Transcriptional regulator dmxR14">
    <location>
        <begin position="1"/>
        <end position="436"/>
    </location>
</feature>
<feature type="DNA-binding region" description="Zn(2)-C6 fungal-type" evidence="1">
    <location>
        <begin position="34"/>
        <end position="61"/>
    </location>
</feature>
<feature type="region of interest" description="Disordered" evidence="2">
    <location>
        <begin position="1"/>
        <end position="32"/>
    </location>
</feature>
<feature type="region of interest" description="Disordered" evidence="2">
    <location>
        <begin position="67"/>
        <end position="136"/>
    </location>
</feature>
<feature type="compositionally biased region" description="Polar residues" evidence="2">
    <location>
        <begin position="1"/>
        <end position="27"/>
    </location>
</feature>
<feature type="compositionally biased region" description="Polar residues" evidence="2">
    <location>
        <begin position="90"/>
        <end position="136"/>
    </location>
</feature>
<dbReference type="EMBL" id="MK182094">
    <property type="protein sequence ID" value="QCL09105.1"/>
    <property type="molecule type" value="Genomic_DNA"/>
</dbReference>
<dbReference type="SMR" id="A0A4P8DK24"/>
<dbReference type="GO" id="GO:0005634">
    <property type="term" value="C:nucleus"/>
    <property type="evidence" value="ECO:0007669"/>
    <property type="project" value="UniProtKB-SubCell"/>
</dbReference>
<dbReference type="GO" id="GO:0003677">
    <property type="term" value="F:DNA binding"/>
    <property type="evidence" value="ECO:0007669"/>
    <property type="project" value="UniProtKB-KW"/>
</dbReference>
<dbReference type="GO" id="GO:0000981">
    <property type="term" value="F:DNA-binding transcription factor activity, RNA polymerase II-specific"/>
    <property type="evidence" value="ECO:0007669"/>
    <property type="project" value="InterPro"/>
</dbReference>
<dbReference type="GO" id="GO:0008270">
    <property type="term" value="F:zinc ion binding"/>
    <property type="evidence" value="ECO:0007669"/>
    <property type="project" value="InterPro"/>
</dbReference>
<dbReference type="GO" id="GO:0045122">
    <property type="term" value="P:aflatoxin biosynthetic process"/>
    <property type="evidence" value="ECO:0007669"/>
    <property type="project" value="InterPro"/>
</dbReference>
<dbReference type="CDD" id="cd00067">
    <property type="entry name" value="GAL4"/>
    <property type="match status" value="1"/>
</dbReference>
<dbReference type="Gene3D" id="4.10.240.10">
    <property type="entry name" value="Zn(2)-C6 fungal-type DNA-binding domain"/>
    <property type="match status" value="1"/>
</dbReference>
<dbReference type="InterPro" id="IPR013700">
    <property type="entry name" value="AflR"/>
</dbReference>
<dbReference type="InterPro" id="IPR050675">
    <property type="entry name" value="OAF3"/>
</dbReference>
<dbReference type="InterPro" id="IPR036864">
    <property type="entry name" value="Zn2-C6_fun-type_DNA-bd_sf"/>
</dbReference>
<dbReference type="InterPro" id="IPR001138">
    <property type="entry name" value="Zn2Cys6_DnaBD"/>
</dbReference>
<dbReference type="PANTHER" id="PTHR31069:SF31">
    <property type="entry name" value="MONODICTYPHENONE CLUSTER TRANSCRIPTION FACTOR-RELATED"/>
    <property type="match status" value="1"/>
</dbReference>
<dbReference type="PANTHER" id="PTHR31069">
    <property type="entry name" value="OLEATE-ACTIVATED TRANSCRIPTION FACTOR 1-RELATED"/>
    <property type="match status" value="1"/>
</dbReference>
<dbReference type="Pfam" id="PF08493">
    <property type="entry name" value="AflR"/>
    <property type="match status" value="1"/>
</dbReference>
<dbReference type="Pfam" id="PF00172">
    <property type="entry name" value="Zn_clus"/>
    <property type="match status" value="1"/>
</dbReference>
<dbReference type="PRINTS" id="PR00755">
    <property type="entry name" value="AFLATOXINBRP"/>
</dbReference>
<dbReference type="SMART" id="SM00066">
    <property type="entry name" value="GAL4"/>
    <property type="match status" value="1"/>
</dbReference>
<dbReference type="SUPFAM" id="SSF57701">
    <property type="entry name" value="Zn2/Cys6 DNA-binding domain"/>
    <property type="match status" value="1"/>
</dbReference>
<dbReference type="PROSITE" id="PS00463">
    <property type="entry name" value="ZN2_CY6_FUNGAL_1"/>
    <property type="match status" value="1"/>
</dbReference>
<dbReference type="PROSITE" id="PS50048">
    <property type="entry name" value="ZN2_CY6_FUNGAL_2"/>
    <property type="match status" value="1"/>
</dbReference>
<protein>
    <recommendedName>
        <fullName evidence="4">Transcriptional regulator dmxR14</fullName>
    </recommendedName>
    <alternativeName>
        <fullName evidence="4">Dimeric xanthone biosynthesis cluster protein R14</fullName>
    </alternativeName>
</protein>
<comment type="function">
    <text evidence="3">Transcriptional regulator; part of the gene cluster that mediates the biosynthesis of the dimeric xanthones cryptosporioptides.</text>
</comment>
<comment type="subcellular location">
    <subcellularLocation>
        <location evidence="1">Nucleus</location>
    </subcellularLocation>
</comment>
<evidence type="ECO:0000255" key="1">
    <source>
        <dbReference type="PROSITE-ProRule" id="PRU00227"/>
    </source>
</evidence>
<evidence type="ECO:0000256" key="2">
    <source>
        <dbReference type="SAM" id="MobiDB-lite"/>
    </source>
</evidence>
<evidence type="ECO:0000269" key="3">
    <source>
    </source>
</evidence>
<evidence type="ECO:0000303" key="4">
    <source>
    </source>
</evidence>
<name>DMR14_CRYX8</name>
<keyword id="KW-0238">DNA-binding</keyword>
<keyword id="KW-0479">Metal-binding</keyword>
<keyword id="KW-0539">Nucleus</keyword>
<keyword id="KW-0804">Transcription</keyword>
<keyword id="KW-0805">Transcription regulation</keyword>
<keyword id="KW-0862">Zinc</keyword>
<reference key="1">
    <citation type="journal article" date="2019" name="Chem. Sci.">
        <title>Structure revision of cryptosporioptides and determination of the genetic basis for dimeric xanthone biosynthesis in fungi.</title>
        <authorList>
            <person name="Greco C."/>
            <person name="de Mattos-Shipley K."/>
            <person name="Bailey A.M."/>
            <person name="Mulholland N.P."/>
            <person name="Vincent J.L."/>
            <person name="Willis C.L."/>
            <person name="Cox R.J."/>
            <person name="Simpson T.J."/>
        </authorList>
    </citation>
    <scope>NUCLEOTIDE SEQUENCE [GENOMIC DNA]</scope>
    <scope>FUNCTION</scope>
    <source>
        <strain>8999</strain>
    </source>
</reference>
<proteinExistence type="inferred from homology"/>